<evidence type="ECO:0000250" key="1"/>
<evidence type="ECO:0000250" key="2">
    <source>
        <dbReference type="UniProtKB" id="Q5VVQ6"/>
    </source>
</evidence>
<evidence type="ECO:0000250" key="3">
    <source>
        <dbReference type="UniProtKB" id="Q96FW1"/>
    </source>
</evidence>
<evidence type="ECO:0000255" key="4">
    <source>
        <dbReference type="PROSITE-ProRule" id="PRU00139"/>
    </source>
</evidence>
<evidence type="ECO:0000256" key="5">
    <source>
        <dbReference type="SAM" id="MobiDB-lite"/>
    </source>
</evidence>
<name>OTU1_DROPS</name>
<gene>
    <name type="ORF">GA18292</name>
</gene>
<organism>
    <name type="scientific">Drosophila pseudoobscura pseudoobscura</name>
    <name type="common">Fruit fly</name>
    <dbReference type="NCBI Taxonomy" id="46245"/>
    <lineage>
        <taxon>Eukaryota</taxon>
        <taxon>Metazoa</taxon>
        <taxon>Ecdysozoa</taxon>
        <taxon>Arthropoda</taxon>
        <taxon>Hexapoda</taxon>
        <taxon>Insecta</taxon>
        <taxon>Pterygota</taxon>
        <taxon>Neoptera</taxon>
        <taxon>Endopterygota</taxon>
        <taxon>Diptera</taxon>
        <taxon>Brachycera</taxon>
        <taxon>Muscomorpha</taxon>
        <taxon>Ephydroidea</taxon>
        <taxon>Drosophilidae</taxon>
        <taxon>Drosophila</taxon>
        <taxon>Sophophora</taxon>
    </lineage>
</organism>
<proteinExistence type="inferred from homology"/>
<dbReference type="EC" id="3.4.19.12" evidence="2"/>
<dbReference type="EMBL" id="CH379067">
    <property type="protein sequence ID" value="EAL31326.1"/>
    <property type="molecule type" value="Genomic_DNA"/>
</dbReference>
<dbReference type="RefSeq" id="XP_001354273.1">
    <property type="nucleotide sequence ID" value="XM_001354237.3"/>
</dbReference>
<dbReference type="SMR" id="Q29FC9"/>
<dbReference type="FunCoup" id="Q29FC9">
    <property type="interactions" value="1170"/>
</dbReference>
<dbReference type="STRING" id="46245.Q29FC9"/>
<dbReference type="MEROPS" id="C85.007"/>
<dbReference type="EnsemblMetazoa" id="FBtr0279612">
    <property type="protein sequence ID" value="FBpp0278050"/>
    <property type="gene ID" value="FBgn0078297"/>
</dbReference>
<dbReference type="KEGG" id="dpo:4814165"/>
<dbReference type="CTD" id="55432"/>
<dbReference type="eggNOG" id="KOG3288">
    <property type="taxonomic scope" value="Eukaryota"/>
</dbReference>
<dbReference type="HOGENOM" id="CLU_049327_1_1_1"/>
<dbReference type="InParanoid" id="Q29FC9"/>
<dbReference type="OMA" id="TRCILVY"/>
<dbReference type="PhylomeDB" id="Q29FC9"/>
<dbReference type="Proteomes" id="UP000001819">
    <property type="component" value="Chromosome X"/>
</dbReference>
<dbReference type="Bgee" id="FBgn0078297">
    <property type="expression patterns" value="Expressed in adult organism and 3 other cell types or tissues"/>
</dbReference>
<dbReference type="GO" id="GO:0005829">
    <property type="term" value="C:cytosol"/>
    <property type="evidence" value="ECO:0007669"/>
    <property type="project" value="TreeGrafter"/>
</dbReference>
<dbReference type="GO" id="GO:0005634">
    <property type="term" value="C:nucleus"/>
    <property type="evidence" value="ECO:0007669"/>
    <property type="project" value="TreeGrafter"/>
</dbReference>
<dbReference type="GO" id="GO:0004843">
    <property type="term" value="F:cysteine-type deubiquitinase activity"/>
    <property type="evidence" value="ECO:0007669"/>
    <property type="project" value="UniProtKB-EC"/>
</dbReference>
<dbReference type="GO" id="GO:0008270">
    <property type="term" value="F:zinc ion binding"/>
    <property type="evidence" value="ECO:0007669"/>
    <property type="project" value="UniProtKB-KW"/>
</dbReference>
<dbReference type="GO" id="GO:0030968">
    <property type="term" value="P:endoplasmic reticulum unfolded protein response"/>
    <property type="evidence" value="ECO:0007669"/>
    <property type="project" value="TreeGrafter"/>
</dbReference>
<dbReference type="GO" id="GO:0036503">
    <property type="term" value="P:ERAD pathway"/>
    <property type="evidence" value="ECO:0007669"/>
    <property type="project" value="TreeGrafter"/>
</dbReference>
<dbReference type="GO" id="GO:0016579">
    <property type="term" value="P:protein deubiquitination"/>
    <property type="evidence" value="ECO:0007669"/>
    <property type="project" value="TreeGrafter"/>
</dbReference>
<dbReference type="CDD" id="cd22745">
    <property type="entry name" value="OTU_OTU1"/>
    <property type="match status" value="1"/>
</dbReference>
<dbReference type="CDD" id="cd17059">
    <property type="entry name" value="Ubl_OTU1"/>
    <property type="match status" value="1"/>
</dbReference>
<dbReference type="FunFam" id="3.10.20.90:FF:000096">
    <property type="entry name" value="Ubiquitin thioesterase OTU1"/>
    <property type="match status" value="1"/>
</dbReference>
<dbReference type="FunFam" id="3.90.70.80:FF:000006">
    <property type="entry name" value="Ubiquitin thioesterase OTU1"/>
    <property type="match status" value="1"/>
</dbReference>
<dbReference type="Gene3D" id="3.90.70.80">
    <property type="match status" value="1"/>
</dbReference>
<dbReference type="Gene3D" id="3.10.20.90">
    <property type="entry name" value="Phosphatidylinositol 3-kinase Catalytic Subunit, Chain A, domain 1"/>
    <property type="match status" value="1"/>
</dbReference>
<dbReference type="InterPro" id="IPR048857">
    <property type="entry name" value="OTU1_Ubl"/>
</dbReference>
<dbReference type="InterPro" id="IPR003323">
    <property type="entry name" value="OTU_dom"/>
</dbReference>
<dbReference type="InterPro" id="IPR038765">
    <property type="entry name" value="Papain-like_cys_pep_sf"/>
</dbReference>
<dbReference type="InterPro" id="IPR029071">
    <property type="entry name" value="Ubiquitin-like_domsf"/>
</dbReference>
<dbReference type="PANTHER" id="PTHR13312">
    <property type="entry name" value="HIV-INDUCED PROTEIN-7-LIKE PROTEASE"/>
    <property type="match status" value="1"/>
</dbReference>
<dbReference type="PANTHER" id="PTHR13312:SF0">
    <property type="entry name" value="UBIQUITIN THIOESTERASE OTU1"/>
    <property type="match status" value="1"/>
</dbReference>
<dbReference type="Pfam" id="PF02338">
    <property type="entry name" value="OTU"/>
    <property type="match status" value="1"/>
</dbReference>
<dbReference type="Pfam" id="PF21403">
    <property type="entry name" value="OTU1_UBXL"/>
    <property type="match status" value="1"/>
</dbReference>
<dbReference type="Pfam" id="PF24560">
    <property type="entry name" value="zf-C2H2_OTU1_C"/>
    <property type="match status" value="1"/>
</dbReference>
<dbReference type="SUPFAM" id="SSF54001">
    <property type="entry name" value="Cysteine proteinases"/>
    <property type="match status" value="1"/>
</dbReference>
<dbReference type="SUPFAM" id="SSF54236">
    <property type="entry name" value="Ubiquitin-like"/>
    <property type="match status" value="1"/>
</dbReference>
<dbReference type="PROSITE" id="PS50802">
    <property type="entry name" value="OTU"/>
    <property type="match status" value="1"/>
</dbReference>
<dbReference type="PROSITE" id="PS00028">
    <property type="entry name" value="ZINC_FINGER_C2H2_1"/>
    <property type="match status" value="1"/>
</dbReference>
<feature type="chain" id="PRO_0000282363" description="Ubiquitin thioesterase OTU1">
    <location>
        <begin position="1"/>
        <end position="358"/>
    </location>
</feature>
<feature type="domain" description="Ubiquitin-like">
    <location>
        <begin position="5"/>
        <end position="87"/>
    </location>
</feature>
<feature type="domain" description="OTU" evidence="4">
    <location>
        <begin position="161"/>
        <end position="285"/>
    </location>
</feature>
<feature type="zinc finger region" description="C2H2-type">
    <location>
        <begin position="328"/>
        <end position="352"/>
    </location>
</feature>
<feature type="region of interest" description="UBX-like" evidence="2">
    <location>
        <begin position="8"/>
        <end position="94"/>
    </location>
</feature>
<feature type="region of interest" description="Disordered" evidence="5">
    <location>
        <begin position="83"/>
        <end position="108"/>
    </location>
</feature>
<feature type="region of interest" description="Cys-loop" evidence="2">
    <location>
        <begin position="166"/>
        <end position="172"/>
    </location>
</feature>
<feature type="region of interest" description="Variable-loop" evidence="2">
    <location>
        <begin position="224"/>
        <end position="234"/>
    </location>
</feature>
<feature type="region of interest" description="His-loop" evidence="2">
    <location>
        <begin position="274"/>
        <end position="278"/>
    </location>
</feature>
<feature type="region of interest" description="S2 site" evidence="2">
    <location>
        <begin position="301"/>
        <end position="306"/>
    </location>
</feature>
<feature type="compositionally biased region" description="Polar residues" evidence="5">
    <location>
        <begin position="89"/>
        <end position="102"/>
    </location>
</feature>
<feature type="active site" evidence="3">
    <location>
        <position position="169"/>
    </location>
</feature>
<feature type="active site" description="Nucleophile" evidence="2">
    <location>
        <position position="172"/>
    </location>
</feature>
<feature type="active site" evidence="2">
    <location>
        <position position="278"/>
    </location>
</feature>
<feature type="active site" evidence="3">
    <location>
        <position position="352"/>
    </location>
</feature>
<feature type="binding site" evidence="2">
    <location>
        <position position="277"/>
    </location>
    <ligand>
        <name>substrate</name>
    </ligand>
</feature>
<accession>Q29FC9</accession>
<comment type="function">
    <text evidence="1">Hydrolase that can remove conjugated ubiquitin from proteins and may therefore play an important regulatory role at the level of protein turnover by preventing degradation.</text>
</comment>
<comment type="catalytic activity">
    <reaction evidence="2">
        <text>Thiol-dependent hydrolysis of ester, thioester, amide, peptide and isopeptide bonds formed by the C-terminal Gly of ubiquitin (a 76-residue protein attached to proteins as an intracellular targeting signal).</text>
        <dbReference type="EC" id="3.4.19.12"/>
    </reaction>
</comment>
<reference key="1">
    <citation type="journal article" date="2005" name="Genome Res.">
        <title>Comparative genome sequencing of Drosophila pseudoobscura: chromosomal, gene, and cis-element evolution.</title>
        <authorList>
            <person name="Richards S."/>
            <person name="Liu Y."/>
            <person name="Bettencourt B.R."/>
            <person name="Hradecky P."/>
            <person name="Letovsky S."/>
            <person name="Nielsen R."/>
            <person name="Thornton K."/>
            <person name="Hubisz M.J."/>
            <person name="Chen R."/>
            <person name="Meisel R.P."/>
            <person name="Couronne O."/>
            <person name="Hua S."/>
            <person name="Smith M.A."/>
            <person name="Zhang P."/>
            <person name="Liu J."/>
            <person name="Bussemaker H.J."/>
            <person name="van Batenburg M.F."/>
            <person name="Howells S.L."/>
            <person name="Scherer S.E."/>
            <person name="Sodergren E."/>
            <person name="Matthews B.B."/>
            <person name="Crosby M.A."/>
            <person name="Schroeder A.J."/>
            <person name="Ortiz-Barrientos D."/>
            <person name="Rives C.M."/>
            <person name="Metzker M.L."/>
            <person name="Muzny D.M."/>
            <person name="Scott G."/>
            <person name="Steffen D."/>
            <person name="Wheeler D.A."/>
            <person name="Worley K.C."/>
            <person name="Havlak P."/>
            <person name="Durbin K.J."/>
            <person name="Egan A."/>
            <person name="Gill R."/>
            <person name="Hume J."/>
            <person name="Morgan M.B."/>
            <person name="Miner G."/>
            <person name="Hamilton C."/>
            <person name="Huang Y."/>
            <person name="Waldron L."/>
            <person name="Verduzco D."/>
            <person name="Clerc-Blankenburg K.P."/>
            <person name="Dubchak I."/>
            <person name="Noor M.A.F."/>
            <person name="Anderson W."/>
            <person name="White K.P."/>
            <person name="Clark A.G."/>
            <person name="Schaeffer S.W."/>
            <person name="Gelbart W.M."/>
            <person name="Weinstock G.M."/>
            <person name="Gibbs R.A."/>
        </authorList>
    </citation>
    <scope>NUCLEOTIDE SEQUENCE [LARGE SCALE GENOMIC DNA]</scope>
    <source>
        <strain>MV2-25 / Tucson 14011-0121.94</strain>
    </source>
</reference>
<keyword id="KW-0378">Hydrolase</keyword>
<keyword id="KW-0479">Metal-binding</keyword>
<keyword id="KW-0645">Protease</keyword>
<keyword id="KW-1185">Reference proteome</keyword>
<keyword id="KW-0788">Thiol protease</keyword>
<keyword id="KW-0833">Ubl conjugation pathway</keyword>
<keyword id="KW-0862">Zinc</keyword>
<keyword id="KW-0863">Zinc-finger</keyword>
<sequence>MTGSFSVKLKSKKGQFIVKDLNQNTTLGELKTRIAQATAIQELQLHVLVGYPPKPLDLSENRENQNLKTVGINSGETLIVEEKAGAAGPTSTPLASGSGSSTMEDDEALARRLQAEEDAEHLRQVSSGGSIETGALNIVQSLEPVISPEESGPNGNFNGILLKKVVPADNSCLFTSIRFVLNGKVDNEGSEMMRHIIAQEVSADTQQYNDAVLGKSNSDYCAWIQKADSWGGAIEVSILSNYYGIEIDVVDIQNAIINRFGEDKNFGLRVFLLFDGIHYDPLYMETQQNSVPATIFPVEEMGVYQQAEQIANEAKSSRQFTNVDKFTLRCMDCDVMLVGQGQAQEHAKKTGHENFEEI</sequence>
<protein>
    <recommendedName>
        <fullName>Ubiquitin thioesterase OTU1</fullName>
        <ecNumber evidence="2">3.4.19.12</ecNumber>
    </recommendedName>
</protein>